<keyword id="KW-0002">3D-structure</keyword>
<keyword id="KW-0119">Carbohydrate metabolism</keyword>
<keyword id="KW-0313">Glucose metabolism</keyword>
<keyword id="KW-0378">Hydrolase</keyword>
<dbReference type="EC" id="3.1.1.31" evidence="1"/>
<dbReference type="EMBL" id="CP000647">
    <property type="protein sequence ID" value="ABR76217.1"/>
    <property type="status" value="ALT_INIT"/>
    <property type="molecule type" value="Genomic_DNA"/>
</dbReference>
<dbReference type="RefSeq" id="WP_020316492.1">
    <property type="nucleotide sequence ID" value="NC_009648.1"/>
</dbReference>
<dbReference type="PDB" id="6NAU">
    <property type="method" value="X-ray"/>
    <property type="resolution" value="1.55 A"/>
    <property type="chains" value="A/B/C=1-331"/>
</dbReference>
<dbReference type="PDBsum" id="6NAU"/>
<dbReference type="SMR" id="A6T6J6"/>
<dbReference type="STRING" id="272620.KPN_00781"/>
<dbReference type="jPOST" id="A6T6J6"/>
<dbReference type="PaxDb" id="272620-KPN_00781"/>
<dbReference type="EnsemblBacteria" id="ABR76217">
    <property type="protein sequence ID" value="ABR76217"/>
    <property type="gene ID" value="KPN_00781"/>
</dbReference>
<dbReference type="KEGG" id="kpn:KPN_00781"/>
<dbReference type="HOGENOM" id="CLU_038716_2_0_6"/>
<dbReference type="UniPathway" id="UPA00115">
    <property type="reaction ID" value="UER00409"/>
</dbReference>
<dbReference type="Proteomes" id="UP000000265">
    <property type="component" value="Chromosome"/>
</dbReference>
<dbReference type="GO" id="GO:0005829">
    <property type="term" value="C:cytosol"/>
    <property type="evidence" value="ECO:0007669"/>
    <property type="project" value="TreeGrafter"/>
</dbReference>
<dbReference type="GO" id="GO:0017057">
    <property type="term" value="F:6-phosphogluconolactonase activity"/>
    <property type="evidence" value="ECO:0007669"/>
    <property type="project" value="UniProtKB-UniRule"/>
</dbReference>
<dbReference type="GO" id="GO:0006006">
    <property type="term" value="P:glucose metabolic process"/>
    <property type="evidence" value="ECO:0007669"/>
    <property type="project" value="UniProtKB-KW"/>
</dbReference>
<dbReference type="GO" id="GO:0009051">
    <property type="term" value="P:pentose-phosphate shunt, oxidative branch"/>
    <property type="evidence" value="ECO:0007669"/>
    <property type="project" value="UniProtKB-UniRule"/>
</dbReference>
<dbReference type="FunFam" id="2.130.10.10:FF:000051">
    <property type="entry name" value="6-phosphogluconolactonase"/>
    <property type="match status" value="1"/>
</dbReference>
<dbReference type="Gene3D" id="2.130.10.10">
    <property type="entry name" value="YVTN repeat-like/Quinoprotein amine dehydrogenase"/>
    <property type="match status" value="1"/>
</dbReference>
<dbReference type="HAMAP" id="MF_01605">
    <property type="entry name" value="6P_gluconolactonase"/>
    <property type="match status" value="1"/>
</dbReference>
<dbReference type="InterPro" id="IPR022528">
    <property type="entry name" value="6-phosphogluconolactonase_YbhE"/>
</dbReference>
<dbReference type="InterPro" id="IPR050282">
    <property type="entry name" value="Cycloisomerase_2"/>
</dbReference>
<dbReference type="InterPro" id="IPR019405">
    <property type="entry name" value="Lactonase_7-beta_prop"/>
</dbReference>
<dbReference type="InterPro" id="IPR011045">
    <property type="entry name" value="N2O_reductase_N"/>
</dbReference>
<dbReference type="InterPro" id="IPR015943">
    <property type="entry name" value="WD40/YVTN_repeat-like_dom_sf"/>
</dbReference>
<dbReference type="NCBIfam" id="NF008258">
    <property type="entry name" value="PRK11028.1"/>
    <property type="match status" value="1"/>
</dbReference>
<dbReference type="PANTHER" id="PTHR30344:SF1">
    <property type="entry name" value="6-PHOSPHOGLUCONOLACTONASE"/>
    <property type="match status" value="1"/>
</dbReference>
<dbReference type="PANTHER" id="PTHR30344">
    <property type="entry name" value="6-PHOSPHOGLUCONOLACTONASE-RELATED"/>
    <property type="match status" value="1"/>
</dbReference>
<dbReference type="Pfam" id="PF10282">
    <property type="entry name" value="Lactonase"/>
    <property type="match status" value="1"/>
</dbReference>
<dbReference type="SUPFAM" id="SSF50974">
    <property type="entry name" value="Nitrous oxide reductase, N-terminal domain"/>
    <property type="match status" value="1"/>
</dbReference>
<reference key="1">
    <citation type="submission" date="2006-09" db="EMBL/GenBank/DDBJ databases">
        <authorList>
            <consortium name="The Klebsiella pneumonia Genome Sequencing Project"/>
            <person name="McClelland M."/>
            <person name="Sanderson E.K."/>
            <person name="Spieth J."/>
            <person name="Clifton W.S."/>
            <person name="Latreille P."/>
            <person name="Sabo A."/>
            <person name="Pepin K."/>
            <person name="Bhonagiri V."/>
            <person name="Porwollik S."/>
            <person name="Ali J."/>
            <person name="Wilson R.K."/>
        </authorList>
    </citation>
    <scope>NUCLEOTIDE SEQUENCE [LARGE SCALE GENOMIC DNA]</scope>
    <source>
        <strain>ATCC 700721 / MGH 78578</strain>
    </source>
</reference>
<evidence type="ECO:0000255" key="1">
    <source>
        <dbReference type="HAMAP-Rule" id="MF_01605"/>
    </source>
</evidence>
<evidence type="ECO:0000305" key="2"/>
<evidence type="ECO:0007829" key="3">
    <source>
        <dbReference type="PDB" id="6NAU"/>
    </source>
</evidence>
<protein>
    <recommendedName>
        <fullName evidence="1">6-phosphogluconolactonase</fullName>
        <shortName evidence="1">6-P-gluconolactonase</shortName>
        <ecNumber evidence="1">3.1.1.31</ecNumber>
    </recommendedName>
</protein>
<gene>
    <name evidence="1" type="primary">pgl</name>
    <name type="synonym">ybhE</name>
    <name type="ordered locus">KPN78578_07560</name>
    <name type="ORF">KPN_00781</name>
</gene>
<accession>A6T6J6</accession>
<sequence>MKQTVYTASPESQQIHVWSLEADGKLTLVQVVDAPGQVQPMVVSPNKEFLYVGVRPEFRVLAYRITPDNGALTFAGEAALPGSPTHISTDHHGRFVFSASYNQGCVSVTPLHDGLPGETITVVEGLEGCHSANISPDNRTLWVPALKQDRICLFTLSDDGFLSAQEPAEVTTVEGAGPRHMVFHPNQQYGYCVNELNSSIDVWELKDPKGNIECVQTLDMMPPDFSGVRWAADIHITPDGGHLYACDRTASIITVFSVSEDGSVLAVEGYQPTETQPRGFNLDHSGKYLIAAGQKSHHIAVYDIVGEQGLLQEKGRYAVGQGPMWVVVNAH</sequence>
<name>6PGL_KLEP7</name>
<proteinExistence type="evidence at protein level"/>
<feature type="chain" id="PRO_0000323499" description="6-phosphogluconolactonase">
    <location>
        <begin position="1"/>
        <end position="331"/>
    </location>
</feature>
<feature type="strand" evidence="3">
    <location>
        <begin position="2"/>
        <end position="9"/>
    </location>
</feature>
<feature type="helix" evidence="3">
    <location>
        <begin position="10"/>
        <end position="12"/>
    </location>
</feature>
<feature type="strand" evidence="3">
    <location>
        <begin position="14"/>
        <end position="20"/>
    </location>
</feature>
<feature type="strand" evidence="3">
    <location>
        <begin position="26"/>
        <end position="33"/>
    </location>
</feature>
<feature type="strand" evidence="3">
    <location>
        <begin position="35"/>
        <end position="43"/>
    </location>
</feature>
<feature type="strand" evidence="3">
    <location>
        <begin position="47"/>
        <end position="55"/>
    </location>
</feature>
<feature type="turn" evidence="3">
    <location>
        <begin position="56"/>
        <end position="58"/>
    </location>
</feature>
<feature type="strand" evidence="3">
    <location>
        <begin position="59"/>
        <end position="65"/>
    </location>
</feature>
<feature type="turn" evidence="3">
    <location>
        <begin position="67"/>
        <end position="69"/>
    </location>
</feature>
<feature type="strand" evidence="3">
    <location>
        <begin position="72"/>
        <end position="79"/>
    </location>
</feature>
<feature type="strand" evidence="3">
    <location>
        <begin position="85"/>
        <end position="89"/>
    </location>
</feature>
<feature type="strand" evidence="3">
    <location>
        <begin position="93"/>
        <end position="100"/>
    </location>
</feature>
<feature type="turn" evidence="3">
    <location>
        <begin position="101"/>
        <end position="104"/>
    </location>
</feature>
<feature type="strand" evidence="3">
    <location>
        <begin position="105"/>
        <end position="112"/>
    </location>
</feature>
<feature type="strand" evidence="3">
    <location>
        <begin position="121"/>
        <end position="123"/>
    </location>
</feature>
<feature type="strand" evidence="3">
    <location>
        <begin position="138"/>
        <end position="145"/>
    </location>
</feature>
<feature type="helix" evidence="3">
    <location>
        <begin position="146"/>
        <end position="148"/>
    </location>
</feature>
<feature type="strand" evidence="3">
    <location>
        <begin position="150"/>
        <end position="156"/>
    </location>
</feature>
<feature type="strand" evidence="3">
    <location>
        <begin position="162"/>
        <end position="171"/>
    </location>
</feature>
<feature type="strand" evidence="3">
    <location>
        <begin position="178"/>
        <end position="183"/>
    </location>
</feature>
<feature type="strand" evidence="3">
    <location>
        <begin position="187"/>
        <end position="194"/>
    </location>
</feature>
<feature type="turn" evidence="3">
    <location>
        <begin position="195"/>
        <end position="198"/>
    </location>
</feature>
<feature type="strand" evidence="3">
    <location>
        <begin position="199"/>
        <end position="206"/>
    </location>
</feature>
<feature type="strand" evidence="3">
    <location>
        <begin position="213"/>
        <end position="219"/>
    </location>
</feature>
<feature type="strand" evidence="3">
    <location>
        <begin position="231"/>
        <end position="236"/>
    </location>
</feature>
<feature type="strand" evidence="3">
    <location>
        <begin position="240"/>
        <end position="247"/>
    </location>
</feature>
<feature type="turn" evidence="3">
    <location>
        <begin position="248"/>
        <end position="251"/>
    </location>
</feature>
<feature type="strand" evidence="3">
    <location>
        <begin position="252"/>
        <end position="258"/>
    </location>
</feature>
<feature type="strand" evidence="3">
    <location>
        <begin position="265"/>
        <end position="272"/>
    </location>
</feature>
<feature type="strand" evidence="3">
    <location>
        <begin position="274"/>
        <end position="276"/>
    </location>
</feature>
<feature type="strand" evidence="3">
    <location>
        <begin position="280"/>
        <end position="282"/>
    </location>
</feature>
<feature type="strand" evidence="3">
    <location>
        <begin position="284"/>
        <end position="292"/>
    </location>
</feature>
<feature type="turn" evidence="3">
    <location>
        <begin position="294"/>
        <end position="296"/>
    </location>
</feature>
<feature type="strand" evidence="3">
    <location>
        <begin position="298"/>
        <end position="305"/>
    </location>
</feature>
<feature type="turn" evidence="3">
    <location>
        <begin position="306"/>
        <end position="309"/>
    </location>
</feature>
<feature type="strand" evidence="3">
    <location>
        <begin position="310"/>
        <end position="318"/>
    </location>
</feature>
<feature type="strand" evidence="3">
    <location>
        <begin position="320"/>
        <end position="322"/>
    </location>
</feature>
<feature type="strand" evidence="3">
    <location>
        <begin position="325"/>
        <end position="331"/>
    </location>
</feature>
<organism>
    <name type="scientific">Klebsiella pneumoniae subsp. pneumoniae (strain ATCC 700721 / MGH 78578)</name>
    <dbReference type="NCBI Taxonomy" id="272620"/>
    <lineage>
        <taxon>Bacteria</taxon>
        <taxon>Pseudomonadati</taxon>
        <taxon>Pseudomonadota</taxon>
        <taxon>Gammaproteobacteria</taxon>
        <taxon>Enterobacterales</taxon>
        <taxon>Enterobacteriaceae</taxon>
        <taxon>Klebsiella/Raoultella group</taxon>
        <taxon>Klebsiella</taxon>
        <taxon>Klebsiella pneumoniae complex</taxon>
    </lineage>
</organism>
<comment type="function">
    <text evidence="1">Catalyzes the hydrolysis of 6-phosphogluconolactone to 6-phosphogluconate.</text>
</comment>
<comment type="catalytic activity">
    <reaction evidence="1">
        <text>6-phospho-D-glucono-1,5-lactone + H2O = 6-phospho-D-gluconate + H(+)</text>
        <dbReference type="Rhea" id="RHEA:12556"/>
        <dbReference type="ChEBI" id="CHEBI:15377"/>
        <dbReference type="ChEBI" id="CHEBI:15378"/>
        <dbReference type="ChEBI" id="CHEBI:57955"/>
        <dbReference type="ChEBI" id="CHEBI:58759"/>
        <dbReference type="EC" id="3.1.1.31"/>
    </reaction>
</comment>
<comment type="pathway">
    <text evidence="1">Carbohydrate degradation; pentose phosphate pathway; D-ribulose 5-phosphate from D-glucose 6-phosphate (oxidative stage): step 2/3.</text>
</comment>
<comment type="similarity">
    <text evidence="1">Belongs to the cycloisomerase 2 family.</text>
</comment>
<comment type="sequence caution" evidence="2">
    <conflict type="erroneous initiation">
        <sequence resource="EMBL-CDS" id="ABR76217"/>
    </conflict>
</comment>